<organism>
    <name type="scientific">Duck hepatitis B virus (strain China)</name>
    <name type="common">DHBV</name>
    <dbReference type="NCBI Taxonomy" id="31510"/>
    <lineage>
        <taxon>Viruses</taxon>
        <taxon>Riboviria</taxon>
        <taxon>Pararnavirae</taxon>
        <taxon>Artverviricota</taxon>
        <taxon>Revtraviricetes</taxon>
        <taxon>Blubervirales</taxon>
        <taxon>Hepadnaviridae</taxon>
        <taxon>Avihepadnavirus</taxon>
        <taxon>Duck hepatitis B virus</taxon>
    </lineage>
</organism>
<organismHost>
    <name type="scientific">Anas</name>
    <name type="common">ducks</name>
    <dbReference type="NCBI Taxonomy" id="8835"/>
</organismHost>
<evidence type="ECO:0000250" key="1"/>
<evidence type="ECO:0000255" key="2"/>
<evidence type="ECO:0000256" key="3">
    <source>
        <dbReference type="SAM" id="MobiDB-lite"/>
    </source>
</evidence>
<evidence type="ECO:0000305" key="4"/>
<feature type="initiator methionine" description="Removed; by host" evidence="1">
    <location>
        <position position="1"/>
    </location>
</feature>
<feature type="chain" id="PRO_0000038077" description="Large envelope protein">
    <location>
        <begin position="2"/>
        <end position="329"/>
    </location>
</feature>
<feature type="chain" id="PRO_0000322197" description="Truncated S protein">
    <location>
        <begin position="163"/>
        <end position="239" status="uncertain"/>
    </location>
</feature>
<feature type="topological domain" description="Cytoplasmic; in internal conformation" evidence="2">
    <location>
        <begin position="2"/>
        <end position="237"/>
    </location>
</feature>
<feature type="topological domain" description="Extracellular; in external conformation" evidence="2">
    <location>
        <begin position="2"/>
        <end position="164"/>
    </location>
</feature>
<feature type="transmembrane region" description="Helical; Name=TM1; Note=In external conformation" evidence="2">
    <location>
        <begin position="165"/>
        <end position="185"/>
    </location>
</feature>
<feature type="topological domain" description="Cytoplasmic; in external conformation" evidence="2">
    <location>
        <begin position="186"/>
        <end position="237"/>
    </location>
</feature>
<feature type="transmembrane region" description="Helical; Name=TM2" evidence="2">
    <location>
        <begin position="238"/>
        <end position="258"/>
    </location>
</feature>
<feature type="topological domain" description="Extracellular" evidence="2">
    <location>
        <begin position="259"/>
        <end position="291"/>
    </location>
</feature>
<feature type="transmembrane region" description="Helical; Name=TM3" evidence="2">
    <location>
        <begin position="292"/>
        <end position="312"/>
    </location>
</feature>
<feature type="topological domain" description="Cytoplasmic" evidence="2">
    <location>
        <begin position="313"/>
        <end position="329"/>
    </location>
</feature>
<feature type="region of interest" description="Pre-S" evidence="1">
    <location>
        <begin position="2"/>
        <end position="162"/>
    </location>
</feature>
<feature type="region of interest" description="Disordered" evidence="3">
    <location>
        <begin position="61"/>
        <end position="129"/>
    </location>
</feature>
<feature type="compositionally biased region" description="Polar residues" evidence="3">
    <location>
        <begin position="76"/>
        <end position="88"/>
    </location>
</feature>
<feature type="compositionally biased region" description="Basic and acidic residues" evidence="3">
    <location>
        <begin position="92"/>
        <end position="109"/>
    </location>
</feature>
<feature type="site" description="Cleavage; by host" evidence="2">
    <location>
        <begin position="239" status="uncertain"/>
        <end position="240" status="uncertain"/>
    </location>
</feature>
<feature type="lipid moiety-binding region" description="N-myristoyl glycine; by host" evidence="1">
    <location>
        <position position="2"/>
    </location>
</feature>
<feature type="glycosylation site" description="N-linked (GlcNAc...) asparagine; by host" evidence="2">
    <location>
        <position position="261"/>
    </location>
</feature>
<feature type="splice variant" id="VSP_031888" description="In isoform S." evidence="4">
    <location>
        <begin position="1"/>
        <end position="162"/>
    </location>
</feature>
<keyword id="KW-0024">Alternative initiation</keyword>
<keyword id="KW-1168">Fusion of virus membrane with host membrane</keyword>
<keyword id="KW-0325">Glycoprotein</keyword>
<keyword id="KW-0945">Host-virus interaction</keyword>
<keyword id="KW-0449">Lipoprotein</keyword>
<keyword id="KW-0472">Membrane</keyword>
<keyword id="KW-0519">Myristate</keyword>
<keyword id="KW-0597">Phosphoprotein</keyword>
<keyword id="KW-0812">Transmembrane</keyword>
<keyword id="KW-1133">Transmembrane helix</keyword>
<keyword id="KW-1161">Viral attachment to host cell</keyword>
<keyword id="KW-0261">Viral envelope protein</keyword>
<keyword id="KW-1162">Viral penetration into host cytoplasm</keyword>
<keyword id="KW-0946">Virion</keyword>
<keyword id="KW-1160">Virus entry into host cell</keyword>
<name>HBSAG_HPBDC</name>
<protein>
    <recommendedName>
        <fullName>Large envelope protein</fullName>
    </recommendedName>
    <alternativeName>
        <fullName>L glycoprotein</fullName>
    </alternativeName>
    <alternativeName>
        <fullName>L-HBsAg</fullName>
        <shortName>LHB</shortName>
    </alternativeName>
    <alternativeName>
        <fullName>Large S protein</fullName>
    </alternativeName>
    <alternativeName>
        <fullName>Large surface protein</fullName>
    </alternativeName>
    <alternativeName>
        <fullName>Major surface antigen</fullName>
    </alternativeName>
    <component>
        <recommendedName>
            <fullName>Truncated S protein</fullName>
            <shortName>St</shortName>
        </recommendedName>
    </component>
</protein>
<sequence length="329" mass="36419">MGQQPAKSMDVRRIEGGEILLNQLAGRMIPKGAVTWSGKYPTIDHLLDHVQTMEEINTLQQQGAWPAGAGRRVGLTNPTPQEIPQPQWTPEEDQKAREAFRRYQEERPPETTTIPPSSTPPWKLQPGDDPLLESKSLLETHPLYQNPEPAVPVIKTPPLKKKMSGTFGGILAGLIGLLVSFFLLIKILEILRKLDWWWISLSSPKGKMQCAFQDTGAQISPHYAGSCPWGCPGFLWTYLRLFIIFLLILLVAAGLLYLTDNGSTILGKLQWASVSALFSSISSLLPSDQKSLVALMFGLLLIWMTSSSATQTLVTLTQLATLSALFFKN</sequence>
<dbReference type="EMBL" id="M21953">
    <property type="protein sequence ID" value="AAA45746.1"/>
    <property type="molecule type" value="Genomic_DNA"/>
</dbReference>
<dbReference type="PIR" id="S12842">
    <property type="entry name" value="SAVLWE"/>
</dbReference>
<dbReference type="SMR" id="P30029"/>
<dbReference type="GlyCosmos" id="P30029">
    <property type="glycosylation" value="1 site, No reported glycans"/>
</dbReference>
<dbReference type="Proteomes" id="UP000008119">
    <property type="component" value="Genome"/>
</dbReference>
<dbReference type="GO" id="GO:0016020">
    <property type="term" value="C:membrane"/>
    <property type="evidence" value="ECO:0007669"/>
    <property type="project" value="UniProtKB-KW"/>
</dbReference>
<dbReference type="GO" id="GO:0019031">
    <property type="term" value="C:viral envelope"/>
    <property type="evidence" value="ECO:0007669"/>
    <property type="project" value="UniProtKB-KW"/>
</dbReference>
<dbReference type="GO" id="GO:0055036">
    <property type="term" value="C:virion membrane"/>
    <property type="evidence" value="ECO:0007669"/>
    <property type="project" value="UniProtKB-SubCell"/>
</dbReference>
<dbReference type="GO" id="GO:0039663">
    <property type="term" value="P:membrane fusion involved in viral entry into host cell"/>
    <property type="evidence" value="ECO:0007669"/>
    <property type="project" value="UniProtKB-KW"/>
</dbReference>
<dbReference type="GO" id="GO:0046718">
    <property type="term" value="P:symbiont entry into host cell"/>
    <property type="evidence" value="ECO:0007669"/>
    <property type="project" value="UniProtKB-KW"/>
</dbReference>
<dbReference type="GO" id="GO:0019062">
    <property type="term" value="P:virion attachment to host cell"/>
    <property type="evidence" value="ECO:0007669"/>
    <property type="project" value="UniProtKB-KW"/>
</dbReference>
<dbReference type="InterPro" id="IPR000349">
    <property type="entry name" value="HBV_HBSAG"/>
</dbReference>
<dbReference type="Pfam" id="PF00695">
    <property type="entry name" value="vMSA"/>
    <property type="match status" value="2"/>
</dbReference>
<reference key="1">
    <citation type="journal article" date="1990" name="Nucleic Acids Res.">
        <title>Complete nucleotide sequence of a Chinese duck hepatitis B virus.</title>
        <authorList>
            <person name="Tong S."/>
            <person name="Mattes F."/>
            <person name="Teubner K."/>
            <person name="Blum H.E."/>
        </authorList>
    </citation>
    <scope>NUCLEOTIDE SEQUENCE [GENOMIC DNA]</scope>
</reference>
<proteinExistence type="inferred from homology"/>
<gene>
    <name type="primary">S</name>
</gene>
<comment type="function">
    <text evidence="1">The large envelope protein exists in two topological conformations, one which is termed 'external' or Le-HBsAg and the other 'internal' or Li-HBsAg. In its external conformation the protein attaches the virus to cell receptors and thereby initiating infection. This interaction determines the species specificity and liver tropism. The large envelope protein probably also assumes fusion between virion and host membranes. In its internal conformation the protein plays a role in virion morphogenesis and mediates the contact with the nucleocapsid like a matrix protein (By similarity).</text>
</comment>
<comment type="function">
    <text evidence="1">Truncated S protein may be involved in translocation of pre-S domain through the virion membrane.</text>
</comment>
<comment type="subunit">
    <text evidence="1">Large internal envelope protein interacts with capsid protein.</text>
</comment>
<comment type="subcellular location">
    <subcellularLocation>
        <location>Virion membrane</location>
    </subcellularLocation>
</comment>
<comment type="alternative products">
    <event type="alternative initiation"/>
    <isoform>
        <id>P30029-1</id>
        <name>L</name>
        <name>Large envelope protein</name>
        <name>LHB</name>
        <name>L-HBsAg</name>
        <sequence type="displayed"/>
    </isoform>
    <isoform>
        <id>P30029-2</id>
        <name>S</name>
        <name>Small envelope protein</name>
        <name>SHB</name>
        <name>S-HBsAg</name>
        <sequence type="described" ref="VSP_031888"/>
    </isoform>
</comment>
<comment type="domain">
    <text>The large envelope protein is synthesized with the pre-S region at the cytosolic side of the endoplasmic reticulum and, hence will be within the virion after budding. Therefore the pre-S region is not N-glycosylated. Later a post-translational translocation of N-terminal pre-S and TM1 domains occur in about 50% of proteins at the virion surface. These molecules change their topology by an unknown mechanism, resulting in exposure of pre-S region at virion surface.</text>
</comment>
<comment type="PTM">
    <text>Myristoylation contributes importantly to DHBV infectivity. It is most likely required for an early step of the life cycle involving the entry or uncoating of virus particles.</text>
</comment>
<comment type="PTM">
    <text>Phosphorylated on pre-S domain for about 50% of L proteins, the L chains with internal pre-S region (Li-HBsAg).</text>
</comment>
<comment type="similarity">
    <text evidence="4">Belongs to the avihepadnavirus major surface antigen family.</text>
</comment>
<accession>P30029</accession>